<reference key="1">
    <citation type="journal article" date="2004" name="Nucleic Acids Res.">
        <title>Thermoadaptation trait revealed by the genome sequence of thermophilic Geobacillus kaustophilus.</title>
        <authorList>
            <person name="Takami H."/>
            <person name="Takaki Y."/>
            <person name="Chee G.-J."/>
            <person name="Nishi S."/>
            <person name="Shimamura S."/>
            <person name="Suzuki H."/>
            <person name="Matsui S."/>
            <person name="Uchiyama I."/>
        </authorList>
    </citation>
    <scope>NUCLEOTIDE SEQUENCE [LARGE SCALE GENOMIC DNA]</scope>
    <source>
        <strain>HTA426</strain>
    </source>
</reference>
<evidence type="ECO:0000255" key="1">
    <source>
        <dbReference type="HAMAP-Rule" id="MF_01319"/>
    </source>
</evidence>
<feature type="chain" id="PRO_0000308271" description="Thiol-disulfide oxidoreductase ResA">
    <location>
        <begin position="1"/>
        <end position="174"/>
    </location>
</feature>
<feature type="transmembrane region" description="Helical; Signal-anchor for type II membrane protein" evidence="1">
    <location>
        <begin position="11"/>
        <end position="30"/>
    </location>
</feature>
<feature type="domain" description="Thioredoxin" evidence="1">
    <location>
        <begin position="36"/>
        <end position="174"/>
    </location>
</feature>
<feature type="disulfide bond" description="Redox-active" evidence="1">
    <location>
        <begin position="74"/>
        <end position="77"/>
    </location>
</feature>
<name>RESA_GEOKA</name>
<comment type="function">
    <text evidence="1">Thiol-disulfide oxidoreductase which is required in disulfide reduction during c-type cytochrome synthesis. May accept reducing equivalents from CcdA, leading to breakage of disulfide bonds in apocytochrome c; following this reduction heme can be covalently attached.</text>
</comment>
<comment type="pathway">
    <text evidence="1">Protein modification; cytochrome c assembly.</text>
</comment>
<comment type="subcellular location">
    <subcellularLocation>
        <location evidence="1">Cell membrane</location>
        <topology evidence="1">Single-pass type II membrane protein</topology>
    </subcellularLocation>
    <text evidence="1">The thioredoxin-like motif is exposed on the outside of the membrane.</text>
</comment>
<comment type="similarity">
    <text evidence="1">Belongs to the thioredoxin family. ResA subfamily.</text>
</comment>
<organism>
    <name type="scientific">Geobacillus kaustophilus (strain HTA426)</name>
    <dbReference type="NCBI Taxonomy" id="235909"/>
    <lineage>
        <taxon>Bacteria</taxon>
        <taxon>Bacillati</taxon>
        <taxon>Bacillota</taxon>
        <taxon>Bacilli</taxon>
        <taxon>Bacillales</taxon>
        <taxon>Anoxybacillaceae</taxon>
        <taxon>Geobacillus</taxon>
        <taxon>Geobacillus thermoleovorans group</taxon>
    </lineage>
</organism>
<keyword id="KW-1003">Cell membrane</keyword>
<keyword id="KW-0201">Cytochrome c-type biogenesis</keyword>
<keyword id="KW-1015">Disulfide bond</keyword>
<keyword id="KW-0472">Membrane</keyword>
<keyword id="KW-0560">Oxidoreductase</keyword>
<keyword id="KW-0676">Redox-active center</keyword>
<keyword id="KW-1185">Reference proteome</keyword>
<keyword id="KW-0735">Signal-anchor</keyword>
<keyword id="KW-0812">Transmembrane</keyword>
<keyword id="KW-1133">Transmembrane helix</keyword>
<dbReference type="EMBL" id="BA000043">
    <property type="protein sequence ID" value="BAD76567.1"/>
    <property type="molecule type" value="Genomic_DNA"/>
</dbReference>
<dbReference type="RefSeq" id="WP_011231764.1">
    <property type="nucleotide sequence ID" value="NC_006510.1"/>
</dbReference>
<dbReference type="SMR" id="Q5KXL9"/>
<dbReference type="STRING" id="235909.GK2282"/>
<dbReference type="GeneID" id="32064132"/>
<dbReference type="KEGG" id="gka:GK2282"/>
<dbReference type="eggNOG" id="COG0526">
    <property type="taxonomic scope" value="Bacteria"/>
</dbReference>
<dbReference type="HOGENOM" id="CLU_042529_11_2_9"/>
<dbReference type="UniPathway" id="UPA00555"/>
<dbReference type="Proteomes" id="UP000001172">
    <property type="component" value="Chromosome"/>
</dbReference>
<dbReference type="GO" id="GO:0005886">
    <property type="term" value="C:plasma membrane"/>
    <property type="evidence" value="ECO:0007669"/>
    <property type="project" value="UniProtKB-SubCell"/>
</dbReference>
<dbReference type="GO" id="GO:0016209">
    <property type="term" value="F:antioxidant activity"/>
    <property type="evidence" value="ECO:0007669"/>
    <property type="project" value="InterPro"/>
</dbReference>
<dbReference type="GO" id="GO:0015036">
    <property type="term" value="F:disulfide oxidoreductase activity"/>
    <property type="evidence" value="ECO:0007669"/>
    <property type="project" value="UniProtKB-UniRule"/>
</dbReference>
<dbReference type="GO" id="GO:0017004">
    <property type="term" value="P:cytochrome complex assembly"/>
    <property type="evidence" value="ECO:0007669"/>
    <property type="project" value="UniProtKB-UniRule"/>
</dbReference>
<dbReference type="CDD" id="cd02966">
    <property type="entry name" value="TlpA_like_family"/>
    <property type="match status" value="1"/>
</dbReference>
<dbReference type="Gene3D" id="3.40.30.10">
    <property type="entry name" value="Glutaredoxin"/>
    <property type="match status" value="1"/>
</dbReference>
<dbReference type="HAMAP" id="MF_01319">
    <property type="entry name" value="ResA"/>
    <property type="match status" value="1"/>
</dbReference>
<dbReference type="InterPro" id="IPR000866">
    <property type="entry name" value="AhpC/TSA"/>
</dbReference>
<dbReference type="InterPro" id="IPR023555">
    <property type="entry name" value="Thiol-dS_OxRdtase_ResA"/>
</dbReference>
<dbReference type="InterPro" id="IPR036249">
    <property type="entry name" value="Thioredoxin-like_sf"/>
</dbReference>
<dbReference type="InterPro" id="IPR013766">
    <property type="entry name" value="Thioredoxin_domain"/>
</dbReference>
<dbReference type="InterPro" id="IPR050553">
    <property type="entry name" value="Thioredoxin_ResA/DsbE_sf"/>
</dbReference>
<dbReference type="NCBIfam" id="NF002854">
    <property type="entry name" value="PRK03147.1"/>
    <property type="match status" value="1"/>
</dbReference>
<dbReference type="PANTHER" id="PTHR42852">
    <property type="entry name" value="THIOL:DISULFIDE INTERCHANGE PROTEIN DSBE"/>
    <property type="match status" value="1"/>
</dbReference>
<dbReference type="PANTHER" id="PTHR42852:SF6">
    <property type="entry name" value="THIOL:DISULFIDE INTERCHANGE PROTEIN DSBE"/>
    <property type="match status" value="1"/>
</dbReference>
<dbReference type="Pfam" id="PF00578">
    <property type="entry name" value="AhpC-TSA"/>
    <property type="match status" value="1"/>
</dbReference>
<dbReference type="SUPFAM" id="SSF52833">
    <property type="entry name" value="Thioredoxin-like"/>
    <property type="match status" value="1"/>
</dbReference>
<dbReference type="PROSITE" id="PS51352">
    <property type="entry name" value="THIOREDOXIN_2"/>
    <property type="match status" value="1"/>
</dbReference>
<gene>
    <name evidence="1" type="primary">resA</name>
    <name type="ordered locus">GK2282</name>
</gene>
<sequence length="174" mass="19858">MKKQQRLVMRTAILLVLLAAIGYTIYTNFFTEKTAVAVGSTAPDFVLTDLKGHEHRLSDYRGKGVFLNFWGTWCKPCEREMPYMNELYPIYKKQGVEILAVNVGEPKLSVEKFAERFGLTFPIVIDRQDQVLNAYNVGPLPTTFLIDKNGEVKQIITGTMTKEDIERHLESIKP</sequence>
<protein>
    <recommendedName>
        <fullName evidence="1">Thiol-disulfide oxidoreductase ResA</fullName>
    </recommendedName>
</protein>
<proteinExistence type="inferred from homology"/>
<accession>Q5KXL9</accession>